<name>MUTS_BACFR</name>
<accession>Q64MG7</accession>
<reference key="1">
    <citation type="journal article" date="2004" name="Proc. Natl. Acad. Sci. U.S.A.">
        <title>Genomic analysis of Bacteroides fragilis reveals extensive DNA inversions regulating cell surface adaptation.</title>
        <authorList>
            <person name="Kuwahara T."/>
            <person name="Yamashita A."/>
            <person name="Hirakawa H."/>
            <person name="Nakayama H."/>
            <person name="Toh H."/>
            <person name="Okada N."/>
            <person name="Kuhara S."/>
            <person name="Hattori M."/>
            <person name="Hayashi T."/>
            <person name="Ohnishi Y."/>
        </authorList>
    </citation>
    <scope>NUCLEOTIDE SEQUENCE [LARGE SCALE GENOMIC DNA]</scope>
    <source>
        <strain>YCH46</strain>
    </source>
</reference>
<feature type="chain" id="PRO_0000224349" description="DNA mismatch repair protein MutS">
    <location>
        <begin position="1"/>
        <end position="862"/>
    </location>
</feature>
<feature type="binding site" evidence="1">
    <location>
        <begin position="608"/>
        <end position="615"/>
    </location>
    <ligand>
        <name>ATP</name>
        <dbReference type="ChEBI" id="CHEBI:30616"/>
    </ligand>
</feature>
<sequence length="862" mass="97320">MMKQFLDLKAKHPDAVMLFRCGDFYETYSTDAIIAAEILGITLTKRANGKGKTVEMAGFPHHALDTYLPKLIRAGKRVAICDQLEDPKTTKKLVKRGITELVTPGVSINDNVLNYKENNFLAAVHFGKSACGIAFLDISTGEFLTAEGPFDYVDKLLNNFAPKEILFERGKRGMFEGNFGSKFFTFELDDWVFTESSSREKLLKHFETKNLKGFGVEHLKNGIIASGAILQYLDMTEHTQVGHITSLARIEEDKYVRLDKFTVRSLELIGSMNDGGSSLLHVIDKTISPMGARLLKRWMVFPLKDEKPINDRLNVVEYFFRKPDFRELIEDELHRIGDLERIISKVAVGRVSPREVVQLKVALQAIEPIKEACQQADNPSLNRIGEQLNLCISIRDRIEKEINNDPPLLINKGGVIKDGVDTELDELRQIAYSGKDYLLKIQQRESELTGIPSLKIAYNSVFGYYIEVRNVHKDKVPQEWIRKQTLVNAERYITQELKEYEEKILGAEDKILVLETRLYTELVQALSEFIPAIQINANQIARIDCLLSFANVAKENNYIRPVIEDNDVLDIRQGRHPVIEKQLPIGEKYIANDVLLDNATQQVIIITGPNMAGKSALLRQTALITLLAQIGSFVPAESAHIGLVDKIFTRVGASDNISVGESTFMVEMNEASDILNNISSRSLVLFDELGRGTSTYDGISIAWAIVEYIHEHPKAKARTLFATHYHELNEMEKSFKRIKNYNVSVKEVDNKVIFLRKLERGGSEHSFGIHVAKMAGMPKSIVKRANEILKQLESDNRQQGISGKPLAEVSENRGGMQLSFFQLDDPILCQIRDEILHLDVNNLTPIEALNKLNDIKKIVRGK</sequence>
<dbReference type="EMBL" id="AP006841">
    <property type="protein sequence ID" value="BAD51320.1"/>
    <property type="molecule type" value="Genomic_DNA"/>
</dbReference>
<dbReference type="RefSeq" id="YP_101854.1">
    <property type="nucleotide sequence ID" value="NC_006347.1"/>
</dbReference>
<dbReference type="SMR" id="Q64MG7"/>
<dbReference type="STRING" id="295405.BF4583"/>
<dbReference type="KEGG" id="bfr:BF4583"/>
<dbReference type="PATRIC" id="fig|295405.11.peg.4408"/>
<dbReference type="HOGENOM" id="CLU_002472_3_1_10"/>
<dbReference type="OrthoDB" id="9802448at2"/>
<dbReference type="Proteomes" id="UP000002197">
    <property type="component" value="Chromosome"/>
</dbReference>
<dbReference type="GO" id="GO:0005829">
    <property type="term" value="C:cytosol"/>
    <property type="evidence" value="ECO:0007669"/>
    <property type="project" value="TreeGrafter"/>
</dbReference>
<dbReference type="GO" id="GO:0005524">
    <property type="term" value="F:ATP binding"/>
    <property type="evidence" value="ECO:0007669"/>
    <property type="project" value="UniProtKB-UniRule"/>
</dbReference>
<dbReference type="GO" id="GO:0140664">
    <property type="term" value="F:ATP-dependent DNA damage sensor activity"/>
    <property type="evidence" value="ECO:0007669"/>
    <property type="project" value="InterPro"/>
</dbReference>
<dbReference type="GO" id="GO:0003684">
    <property type="term" value="F:damaged DNA binding"/>
    <property type="evidence" value="ECO:0007669"/>
    <property type="project" value="UniProtKB-UniRule"/>
</dbReference>
<dbReference type="GO" id="GO:0030983">
    <property type="term" value="F:mismatched DNA binding"/>
    <property type="evidence" value="ECO:0007669"/>
    <property type="project" value="InterPro"/>
</dbReference>
<dbReference type="GO" id="GO:0006298">
    <property type="term" value="P:mismatch repair"/>
    <property type="evidence" value="ECO:0007669"/>
    <property type="project" value="UniProtKB-UniRule"/>
</dbReference>
<dbReference type="CDD" id="cd03284">
    <property type="entry name" value="ABC_MutS1"/>
    <property type="match status" value="1"/>
</dbReference>
<dbReference type="FunFam" id="1.10.1420.10:FF:000002">
    <property type="entry name" value="DNA mismatch repair protein MutS"/>
    <property type="match status" value="1"/>
</dbReference>
<dbReference type="Gene3D" id="1.10.1420.10">
    <property type="match status" value="2"/>
</dbReference>
<dbReference type="Gene3D" id="3.40.1170.10">
    <property type="entry name" value="DNA repair protein MutS, domain I"/>
    <property type="match status" value="1"/>
</dbReference>
<dbReference type="Gene3D" id="3.30.420.110">
    <property type="entry name" value="MutS, connector domain"/>
    <property type="match status" value="1"/>
</dbReference>
<dbReference type="Gene3D" id="3.40.50.300">
    <property type="entry name" value="P-loop containing nucleotide triphosphate hydrolases"/>
    <property type="match status" value="1"/>
</dbReference>
<dbReference type="HAMAP" id="MF_00096">
    <property type="entry name" value="MutS"/>
    <property type="match status" value="1"/>
</dbReference>
<dbReference type="InterPro" id="IPR005748">
    <property type="entry name" value="DNA_mismatch_repair_MutS"/>
</dbReference>
<dbReference type="InterPro" id="IPR007695">
    <property type="entry name" value="DNA_mismatch_repair_MutS-lik_N"/>
</dbReference>
<dbReference type="InterPro" id="IPR017261">
    <property type="entry name" value="DNA_mismatch_repair_MutS/MSH"/>
</dbReference>
<dbReference type="InterPro" id="IPR000432">
    <property type="entry name" value="DNA_mismatch_repair_MutS_C"/>
</dbReference>
<dbReference type="InterPro" id="IPR007861">
    <property type="entry name" value="DNA_mismatch_repair_MutS_clamp"/>
</dbReference>
<dbReference type="InterPro" id="IPR007696">
    <property type="entry name" value="DNA_mismatch_repair_MutS_core"/>
</dbReference>
<dbReference type="InterPro" id="IPR016151">
    <property type="entry name" value="DNA_mismatch_repair_MutS_N"/>
</dbReference>
<dbReference type="InterPro" id="IPR036187">
    <property type="entry name" value="DNA_mismatch_repair_MutS_sf"/>
</dbReference>
<dbReference type="InterPro" id="IPR007860">
    <property type="entry name" value="DNA_mmatch_repair_MutS_con_dom"/>
</dbReference>
<dbReference type="InterPro" id="IPR045076">
    <property type="entry name" value="MutS"/>
</dbReference>
<dbReference type="InterPro" id="IPR036678">
    <property type="entry name" value="MutS_con_dom_sf"/>
</dbReference>
<dbReference type="InterPro" id="IPR027417">
    <property type="entry name" value="P-loop_NTPase"/>
</dbReference>
<dbReference type="NCBIfam" id="TIGR01070">
    <property type="entry name" value="mutS1"/>
    <property type="match status" value="1"/>
</dbReference>
<dbReference type="NCBIfam" id="NF003810">
    <property type="entry name" value="PRK05399.1"/>
    <property type="match status" value="1"/>
</dbReference>
<dbReference type="PANTHER" id="PTHR11361:SF34">
    <property type="entry name" value="DNA MISMATCH REPAIR PROTEIN MSH1, MITOCHONDRIAL"/>
    <property type="match status" value="1"/>
</dbReference>
<dbReference type="PANTHER" id="PTHR11361">
    <property type="entry name" value="DNA MISMATCH REPAIR PROTEIN MUTS FAMILY MEMBER"/>
    <property type="match status" value="1"/>
</dbReference>
<dbReference type="Pfam" id="PF01624">
    <property type="entry name" value="MutS_I"/>
    <property type="match status" value="1"/>
</dbReference>
<dbReference type="Pfam" id="PF05188">
    <property type="entry name" value="MutS_II"/>
    <property type="match status" value="1"/>
</dbReference>
<dbReference type="Pfam" id="PF05192">
    <property type="entry name" value="MutS_III"/>
    <property type="match status" value="1"/>
</dbReference>
<dbReference type="Pfam" id="PF05190">
    <property type="entry name" value="MutS_IV"/>
    <property type="match status" value="1"/>
</dbReference>
<dbReference type="Pfam" id="PF00488">
    <property type="entry name" value="MutS_V"/>
    <property type="match status" value="1"/>
</dbReference>
<dbReference type="PIRSF" id="PIRSF037677">
    <property type="entry name" value="DNA_mis_repair_Msh6"/>
    <property type="match status" value="1"/>
</dbReference>
<dbReference type="SMART" id="SM00534">
    <property type="entry name" value="MUTSac"/>
    <property type="match status" value="1"/>
</dbReference>
<dbReference type="SMART" id="SM00533">
    <property type="entry name" value="MUTSd"/>
    <property type="match status" value="1"/>
</dbReference>
<dbReference type="SUPFAM" id="SSF55271">
    <property type="entry name" value="DNA repair protein MutS, domain I"/>
    <property type="match status" value="1"/>
</dbReference>
<dbReference type="SUPFAM" id="SSF53150">
    <property type="entry name" value="DNA repair protein MutS, domain II"/>
    <property type="match status" value="1"/>
</dbReference>
<dbReference type="SUPFAM" id="SSF48334">
    <property type="entry name" value="DNA repair protein MutS, domain III"/>
    <property type="match status" value="1"/>
</dbReference>
<dbReference type="SUPFAM" id="SSF52540">
    <property type="entry name" value="P-loop containing nucleoside triphosphate hydrolases"/>
    <property type="match status" value="1"/>
</dbReference>
<dbReference type="PROSITE" id="PS00486">
    <property type="entry name" value="DNA_MISMATCH_REPAIR_2"/>
    <property type="match status" value="1"/>
</dbReference>
<organism>
    <name type="scientific">Bacteroides fragilis (strain YCH46)</name>
    <dbReference type="NCBI Taxonomy" id="295405"/>
    <lineage>
        <taxon>Bacteria</taxon>
        <taxon>Pseudomonadati</taxon>
        <taxon>Bacteroidota</taxon>
        <taxon>Bacteroidia</taxon>
        <taxon>Bacteroidales</taxon>
        <taxon>Bacteroidaceae</taxon>
        <taxon>Bacteroides</taxon>
    </lineage>
</organism>
<keyword id="KW-0067">ATP-binding</keyword>
<keyword id="KW-0227">DNA damage</keyword>
<keyword id="KW-0234">DNA repair</keyword>
<keyword id="KW-0238">DNA-binding</keyword>
<keyword id="KW-0547">Nucleotide-binding</keyword>
<proteinExistence type="inferred from homology"/>
<comment type="function">
    <text evidence="1">This protein is involved in the repair of mismatches in DNA. It is possible that it carries out the mismatch recognition step. This protein has a weak ATPase activity.</text>
</comment>
<comment type="similarity">
    <text evidence="1">Belongs to the DNA mismatch repair MutS family.</text>
</comment>
<gene>
    <name evidence="1" type="primary">mutS</name>
    <name type="ordered locus">BF4583</name>
</gene>
<evidence type="ECO:0000255" key="1">
    <source>
        <dbReference type="HAMAP-Rule" id="MF_00096"/>
    </source>
</evidence>
<protein>
    <recommendedName>
        <fullName evidence="1">DNA mismatch repair protein MutS</fullName>
    </recommendedName>
</protein>